<keyword id="KW-0240">DNA-directed RNA polymerase</keyword>
<keyword id="KW-0548">Nucleotidyltransferase</keyword>
<keyword id="KW-0614">Plasmid</keyword>
<keyword id="KW-0804">Transcription</keyword>
<keyword id="KW-0808">Transferase</keyword>
<organism>
    <name type="scientific">Kluyveromyces lactis (strain ATCC 8585 / CBS 2359 / DSM 70799 / NBRC 1267 / NRRL Y-1140 / WM37)</name>
    <name type="common">Yeast</name>
    <name type="synonym">Candida sphaerica</name>
    <dbReference type="NCBI Taxonomy" id="284590"/>
    <lineage>
        <taxon>Eukaryota</taxon>
        <taxon>Fungi</taxon>
        <taxon>Dikarya</taxon>
        <taxon>Ascomycota</taxon>
        <taxon>Saccharomycotina</taxon>
        <taxon>Saccharomycetes</taxon>
        <taxon>Saccharomycetales</taxon>
        <taxon>Saccharomycetaceae</taxon>
        <taxon>Kluyveromyces</taxon>
    </lineage>
</organism>
<dbReference type="EC" id="2.7.7.6"/>
<dbReference type="EMBL" id="X07776">
    <property type="protein sequence ID" value="CAA30607.1"/>
    <property type="molecule type" value="Genomic_DNA"/>
</dbReference>
<dbReference type="EMBL" id="X07946">
    <property type="protein sequence ID" value="CAA30770.1"/>
    <property type="molecule type" value="Genomic_DNA"/>
</dbReference>
<dbReference type="PIR" id="S00964">
    <property type="entry name" value="S00964"/>
</dbReference>
<dbReference type="PIR" id="S10340">
    <property type="entry name" value="S10340"/>
</dbReference>
<dbReference type="SMR" id="P05472"/>
<dbReference type="STRING" id="284590.P05472"/>
<dbReference type="PaxDb" id="284590-P05472"/>
<dbReference type="InParanoid" id="P05472"/>
<dbReference type="GO" id="GO:0000428">
    <property type="term" value="C:DNA-directed RNA polymerase complex"/>
    <property type="evidence" value="ECO:0007669"/>
    <property type="project" value="UniProtKB-KW"/>
</dbReference>
<dbReference type="GO" id="GO:0005739">
    <property type="term" value="C:mitochondrion"/>
    <property type="evidence" value="ECO:0007669"/>
    <property type="project" value="GOC"/>
</dbReference>
<dbReference type="GO" id="GO:0003677">
    <property type="term" value="F:DNA binding"/>
    <property type="evidence" value="ECO:0007669"/>
    <property type="project" value="InterPro"/>
</dbReference>
<dbReference type="GO" id="GO:0003899">
    <property type="term" value="F:DNA-directed RNA polymerase activity"/>
    <property type="evidence" value="ECO:0007669"/>
    <property type="project" value="UniProtKB-EC"/>
</dbReference>
<dbReference type="GO" id="GO:0032549">
    <property type="term" value="F:ribonucleoside binding"/>
    <property type="evidence" value="ECO:0007669"/>
    <property type="project" value="InterPro"/>
</dbReference>
<dbReference type="GO" id="GO:0006351">
    <property type="term" value="P:DNA-templated transcription"/>
    <property type="evidence" value="ECO:0007669"/>
    <property type="project" value="InterPro"/>
</dbReference>
<dbReference type="Gene3D" id="2.40.40.20">
    <property type="match status" value="1"/>
</dbReference>
<dbReference type="Gene3D" id="3.90.1100.10">
    <property type="match status" value="1"/>
</dbReference>
<dbReference type="Gene3D" id="2.40.270.10">
    <property type="entry name" value="DNA-directed RNA polymerase, subunit 2, domain 6"/>
    <property type="match status" value="2"/>
</dbReference>
<dbReference type="InterPro" id="IPR015712">
    <property type="entry name" value="DNA-dir_RNA_pol_su2"/>
</dbReference>
<dbReference type="InterPro" id="IPR007120">
    <property type="entry name" value="DNA-dir_RNAP_su2_dom"/>
</dbReference>
<dbReference type="InterPro" id="IPR037033">
    <property type="entry name" value="DNA-dir_RNAP_su2_hyb_sf"/>
</dbReference>
<dbReference type="InterPro" id="IPR000722">
    <property type="entry name" value="RNA_pol_asu"/>
</dbReference>
<dbReference type="InterPro" id="IPR007121">
    <property type="entry name" value="RNA_pol_bsu_CS"/>
</dbReference>
<dbReference type="InterPro" id="IPR006592">
    <property type="entry name" value="RNA_pol_N"/>
</dbReference>
<dbReference type="InterPro" id="IPR007645">
    <property type="entry name" value="RNA_pol_Rpb2_3"/>
</dbReference>
<dbReference type="PANTHER" id="PTHR20856">
    <property type="entry name" value="DNA-DIRECTED RNA POLYMERASE I SUBUNIT 2"/>
    <property type="match status" value="1"/>
</dbReference>
<dbReference type="Pfam" id="PF00623">
    <property type="entry name" value="RNA_pol_Rpb1_2"/>
    <property type="match status" value="1"/>
</dbReference>
<dbReference type="Pfam" id="PF04565">
    <property type="entry name" value="RNA_pol_Rpb2_3"/>
    <property type="match status" value="1"/>
</dbReference>
<dbReference type="Pfam" id="PF00562">
    <property type="entry name" value="RNA_pol_Rpb2_6"/>
    <property type="match status" value="2"/>
</dbReference>
<dbReference type="SMART" id="SM00663">
    <property type="entry name" value="RPOLA_N"/>
    <property type="match status" value="1"/>
</dbReference>
<dbReference type="SUPFAM" id="SSF64484">
    <property type="entry name" value="beta and beta-prime subunits of DNA dependent RNA-polymerase"/>
    <property type="match status" value="2"/>
</dbReference>
<dbReference type="PROSITE" id="PS01166">
    <property type="entry name" value="RNA_POL_BETA"/>
    <property type="match status" value="1"/>
</dbReference>
<accession>P05472</accession>
<comment type="function">
    <text>The presence of the two linear plasmids, termed pGKL1 and pGKL2, in strains of Kluyveromyces lactis confers the killer phenotype to the host cell, by promoting the secretion of a toxin able to inhibit the growth of sensitive strains.</text>
</comment>
<comment type="catalytic activity">
    <reaction>
        <text>RNA(n) + a ribonucleoside 5'-triphosphate = RNA(n+1) + diphosphate</text>
        <dbReference type="Rhea" id="RHEA:21248"/>
        <dbReference type="Rhea" id="RHEA-COMP:14527"/>
        <dbReference type="Rhea" id="RHEA-COMP:17342"/>
        <dbReference type="ChEBI" id="CHEBI:33019"/>
        <dbReference type="ChEBI" id="CHEBI:61557"/>
        <dbReference type="ChEBI" id="CHEBI:140395"/>
        <dbReference type="EC" id="2.7.7.6"/>
    </reaction>
</comment>
<comment type="similarity">
    <text evidence="1">Belongs to the RNA polymerase beta chain family.</text>
</comment>
<evidence type="ECO:0000305" key="1"/>
<feature type="chain" id="PRO_0000048071" description="Probable DNA-directed RNA polymerase">
    <location>
        <begin position="1"/>
        <end position="982"/>
    </location>
</feature>
<feature type="sequence conflict" description="In Ref. 2; CAA30770." evidence="1" ref="2">
    <original>T</original>
    <variation>N</variation>
    <location>
        <position position="32"/>
    </location>
</feature>
<feature type="sequence conflict" description="In Ref. 2; CAA30770." evidence="1" ref="2">
    <original>I</original>
    <variation>K</variation>
    <location>
        <position position="303"/>
    </location>
</feature>
<feature type="sequence conflict" description="In Ref. 2; CAA30770." evidence="1" ref="2">
    <original>F</original>
    <variation>C</variation>
    <location>
        <position position="917"/>
    </location>
</feature>
<protein>
    <recommendedName>
        <fullName>Probable DNA-directed RNA polymerase</fullName>
        <ecNumber>2.7.7.6</ecNumber>
    </recommendedName>
    <alternativeName>
        <fullName>Killer plasmid PGKL2 protein 6</fullName>
    </alternativeName>
</protein>
<sequence>MIVLDIPKMDYGQIEIYNDYFRNVDKKTIKYTPMECIEYKLSYCAIYNDRELPIMIGSSLDISKENPLNLKGYFIIDGICKSVNNIKIKEKIHFSKDRAYLSDDSIIQIKDMFNMTIKNNKNTLKWNLPLNWSDIIKYSDHKKELENHLKIIDSFNKKAEKPIKNEIDLISLCYMFECWLGLREEPRLYYRLVTPGELIHDIIKEKRSVIKCFRTNTWTVKNIRNVFCVSEDMKHYNKIGDLESIRRITIPSSRSNAPMKERRVEDNDKYKICPIQTSDGSLCGTITYLCKDAKITTKIDTIIVEKADNGLHTFFNNTYLGKVKVKTKESDIYCIDKICYIFGNIGRIIKGNYLCSYTGELLDYKNYNPPIRSMFVCNMIKQAITGDSVYSGDILHNTKSLINGDLGHKLEIAIMPWKKFNIEDAIVISNKVSKLFRSKRTIIHRENDVKILNVYVNINQNITKGDLLYRTYDPMQVKTINFVYAEHDGKVKEIIREEKYLKLILIKERDLEVGDKMSSMHGQKGIVSLIENNMPYYYKNGEKVEIDLIINPHAFPSRMTLGQIKEMGEKEEYVYIEDTKLENKIIVGKCLYLALRHQVDDKVQFRNGGNIDIVTKQPVSGRKRSGGLRFGQMERDILIGLGAWNTIKEIWSIDRSKIKIDSKTGRINWIRYDKEMEIGQYFKICLSYMRSLGRDILIKNDKYSIVEFDNSYLPKTDTMKFGDLDVLDLRIYKGIVMLPLCLRSTYLNKLYVDRKYSEAEKEVTKLLKSKNGAYHTLVEGHRVDRCIRSVIVPDPTLDIDTIKIPFGANIGCEYGLLNRQPSLNVDSIKLVKLKQGSNKTIAINPLLCQSFNADFDGDEMNIYGIRNKESIEEMKILAKVIENKTQDYILDKKDLTANKKGILEMIEKGSKGKMFNFEHMFKEIGKVTINKKEINIKGCYNNSINDEEWYEMCKVARENAASISINTPITGYLENICNEMYL</sequence>
<geneLocation type="plasmid">
    <name>pGKl-2</name>
</geneLocation>
<reference key="1">
    <citation type="journal article" date="1988" name="Nucleic Acids Res.">
        <title>Genome organization of the killer plasmid pGKL2 from Kluyveromyces lactis.</title>
        <authorList>
            <person name="Tommasino M."/>
            <person name="Ricci S."/>
            <person name="Galeotti C.L."/>
        </authorList>
    </citation>
    <scope>NUCLEOTIDE SEQUENCE [GENOMIC DNA]</scope>
    <source>
        <strain>ATCC 8585 / CBS 2359 / DSM 70799 / NBRC 1267 / NRRL Y-1140 / WM37</strain>
    </source>
</reference>
<reference key="2">
    <citation type="journal article" date="1988" name="Nucleic Acids Res.">
        <title>Extranuclear gene expression in yeast: evidence for a plasmid-encoded RNA polymerase of unique structure.</title>
        <authorList>
            <person name="Wilson D.W."/>
            <person name="Meacock P.A."/>
        </authorList>
    </citation>
    <scope>NUCLEOTIDE SEQUENCE [GENOMIC DNA]</scope>
    <source>
        <strain>ATCC 8585 / CBS 2359 / DSM 70799 / NBRC 1267 / NRRL Y-1140 / WM37</strain>
    </source>
</reference>
<proteinExistence type="inferred from homology"/>
<name>RPOL_KLULA</name>